<protein>
    <recommendedName>
        <fullName>Eukaryotic translation initiation factor 2 subunit 2</fullName>
    </recommendedName>
    <alternativeName>
        <fullName>Eukaryotic translation initiation factor 2 subunit beta</fullName>
        <shortName>eIF2-beta</shortName>
    </alternativeName>
</protein>
<reference key="1">
    <citation type="journal article" date="2005" name="BMC Genomics">
        <title>Characterization of 954 bovine full-CDS cDNA sequences.</title>
        <authorList>
            <person name="Harhay G.P."/>
            <person name="Sonstegard T.S."/>
            <person name="Keele J.W."/>
            <person name="Heaton M.P."/>
            <person name="Clawson M.L."/>
            <person name="Snelling W.M."/>
            <person name="Wiedmann R.T."/>
            <person name="Van Tassell C.P."/>
            <person name="Smith T.P.L."/>
        </authorList>
    </citation>
    <scope>NUCLEOTIDE SEQUENCE [LARGE SCALE MRNA]</scope>
</reference>
<reference key="2">
    <citation type="submission" date="2006-08" db="EMBL/GenBank/DDBJ databases">
        <authorList>
            <consortium name="NIH - Mammalian Gene Collection (MGC) project"/>
        </authorList>
    </citation>
    <scope>NUCLEOTIDE SEQUENCE [LARGE SCALE MRNA]</scope>
    <source>
        <strain>Hereford</strain>
        <tissue>Basal ganglia</tissue>
    </source>
</reference>
<comment type="function">
    <text evidence="1">Component of the eIF2 complex that functions in the early steps of protein synthesis by forming a ternary complex with GTP and initiator tRNA. This complex binds to a 40S ribosomal subunit, followed by mRNA binding to form a 43S pre-initiation complex (43S PIC). Junction of the 60S ribosomal subunit to form the 80S initiation complex is preceded by hydrolysis of the GTP bound to eIF2 and release of an eIF2-GDP binary complex. In order for eIF2 to recycle and catalyze another round of initiation, the GDP bound to eIF2 must exchange with GTP by way of a reaction catalyzed by eIF2B.</text>
</comment>
<comment type="subunit">
    <text evidence="2 5">Eukaryotic translation initiation factor 2 eIF2 is a heterotrimeric complex composed of an alpha (EIF2S1), a beta (EIF2S2) and a gamma (EIF2S3) chain (By similarity). eIF2 is member of the 43S pre-initiation complex (43S PIC). eIF2 forms a complex with at least CELF1/CUGBP1, CALR, CALR3, EIF2S1, EIF2S2, HSP90B1 and HSPA5 (By similarity). Interacts with BZW2/5MP1 (By similarity). Interacts with EIF5 (By similarity).</text>
</comment>
<comment type="subcellular location">
    <subcellularLocation>
        <location evidence="4">Cytoplasm</location>
        <location evidence="4">Cytosol</location>
    </subcellularLocation>
</comment>
<comment type="similarity">
    <text evidence="8">Belongs to the eIF-2-beta/eIF-5 family.</text>
</comment>
<keyword id="KW-0007">Acetylation</keyword>
<keyword id="KW-0963">Cytoplasm</keyword>
<keyword id="KW-0396">Initiation factor</keyword>
<keyword id="KW-1017">Isopeptide bond</keyword>
<keyword id="KW-0479">Metal-binding</keyword>
<keyword id="KW-0597">Phosphoprotein</keyword>
<keyword id="KW-0648">Protein biosynthesis</keyword>
<keyword id="KW-1185">Reference proteome</keyword>
<keyword id="KW-0832">Ubl conjugation</keyword>
<keyword id="KW-0862">Zinc</keyword>
<keyword id="KW-0863">Zinc-finger</keyword>
<evidence type="ECO:0000250" key="1">
    <source>
        <dbReference type="UniProtKB" id="P05198"/>
    </source>
</evidence>
<evidence type="ECO:0000250" key="2">
    <source>
        <dbReference type="UniProtKB" id="P20042"/>
    </source>
</evidence>
<evidence type="ECO:0000250" key="3">
    <source>
        <dbReference type="UniProtKB" id="P41035"/>
    </source>
</evidence>
<evidence type="ECO:0000250" key="4">
    <source>
        <dbReference type="UniProtKB" id="P56329"/>
    </source>
</evidence>
<evidence type="ECO:0000250" key="5">
    <source>
        <dbReference type="UniProtKB" id="Q99L45"/>
    </source>
</evidence>
<evidence type="ECO:0000255" key="6"/>
<evidence type="ECO:0000256" key="7">
    <source>
        <dbReference type="SAM" id="MobiDB-lite"/>
    </source>
</evidence>
<evidence type="ECO:0000305" key="8"/>
<accession>Q5E9D0</accession>
<accession>Q0IIJ6</accession>
<dbReference type="EMBL" id="BT020990">
    <property type="protein sequence ID" value="AAX09007.1"/>
    <property type="molecule type" value="mRNA"/>
</dbReference>
<dbReference type="EMBL" id="BC122609">
    <property type="protein sequence ID" value="AAI22610.1"/>
    <property type="molecule type" value="mRNA"/>
</dbReference>
<dbReference type="RefSeq" id="NP_001015621.1">
    <property type="nucleotide sequence ID" value="NM_001015621.1"/>
</dbReference>
<dbReference type="SMR" id="Q5E9D0"/>
<dbReference type="FunCoup" id="Q5E9D0">
    <property type="interactions" value="3734"/>
</dbReference>
<dbReference type="STRING" id="9913.ENSBTAP00000059250"/>
<dbReference type="PaxDb" id="9913-ENSBTAP00000007832"/>
<dbReference type="PeptideAtlas" id="Q5E9D0"/>
<dbReference type="GeneID" id="520094"/>
<dbReference type="KEGG" id="bta:520094"/>
<dbReference type="CTD" id="8894"/>
<dbReference type="eggNOG" id="KOG2768">
    <property type="taxonomic scope" value="Eukaryota"/>
</dbReference>
<dbReference type="HOGENOM" id="CLU_026663_0_1_1"/>
<dbReference type="InParanoid" id="Q5E9D0"/>
<dbReference type="OrthoDB" id="10255414at2759"/>
<dbReference type="TreeFam" id="TF101503"/>
<dbReference type="Proteomes" id="UP000009136">
    <property type="component" value="Unplaced"/>
</dbReference>
<dbReference type="GO" id="GO:0005829">
    <property type="term" value="C:cytosol"/>
    <property type="evidence" value="ECO:0007669"/>
    <property type="project" value="UniProtKB-SubCell"/>
</dbReference>
<dbReference type="GO" id="GO:0005850">
    <property type="term" value="C:eukaryotic translation initiation factor 2 complex"/>
    <property type="evidence" value="ECO:0000250"/>
    <property type="project" value="UniProtKB"/>
</dbReference>
<dbReference type="GO" id="GO:0003729">
    <property type="term" value="F:mRNA binding"/>
    <property type="evidence" value="ECO:0000318"/>
    <property type="project" value="GO_Central"/>
</dbReference>
<dbReference type="GO" id="GO:0003743">
    <property type="term" value="F:translation initiation factor activity"/>
    <property type="evidence" value="ECO:0000250"/>
    <property type="project" value="UniProtKB"/>
</dbReference>
<dbReference type="GO" id="GO:0031369">
    <property type="term" value="F:translation initiation factor binding"/>
    <property type="evidence" value="ECO:0000318"/>
    <property type="project" value="GO_Central"/>
</dbReference>
<dbReference type="GO" id="GO:0008270">
    <property type="term" value="F:zinc ion binding"/>
    <property type="evidence" value="ECO:0007669"/>
    <property type="project" value="UniProtKB-KW"/>
</dbReference>
<dbReference type="GO" id="GO:0002183">
    <property type="term" value="P:cytoplasmic translational initiation"/>
    <property type="evidence" value="ECO:0000250"/>
    <property type="project" value="UniProtKB"/>
</dbReference>
<dbReference type="GO" id="GO:0001731">
    <property type="term" value="P:formation of translation preinitiation complex"/>
    <property type="evidence" value="ECO:0000318"/>
    <property type="project" value="GO_Central"/>
</dbReference>
<dbReference type="FunFam" id="3.30.30.170:FF:000001">
    <property type="entry name" value="Eukaryotic translation initiation factor 2 subunit"/>
    <property type="match status" value="1"/>
</dbReference>
<dbReference type="Gene3D" id="3.30.30.170">
    <property type="match status" value="1"/>
</dbReference>
<dbReference type="InterPro" id="IPR045196">
    <property type="entry name" value="IF2/IF5"/>
</dbReference>
<dbReference type="InterPro" id="IPR002735">
    <property type="entry name" value="Transl_init_fac_IF2/IF5_dom"/>
</dbReference>
<dbReference type="InterPro" id="IPR016189">
    <property type="entry name" value="Transl_init_fac_IF2/IF5_N"/>
</dbReference>
<dbReference type="InterPro" id="IPR016190">
    <property type="entry name" value="Transl_init_fac_IF2/IF5_Zn-bd"/>
</dbReference>
<dbReference type="PANTHER" id="PTHR23001">
    <property type="entry name" value="EUKARYOTIC TRANSLATION INITIATION FACTOR"/>
    <property type="match status" value="1"/>
</dbReference>
<dbReference type="PANTHER" id="PTHR23001:SF3">
    <property type="entry name" value="EUKARYOTIC TRANSLATION INITIATION FACTOR 2 SUBUNIT 2"/>
    <property type="match status" value="1"/>
</dbReference>
<dbReference type="Pfam" id="PF01873">
    <property type="entry name" value="eIF-5_eIF-2B"/>
    <property type="match status" value="1"/>
</dbReference>
<dbReference type="SMART" id="SM00653">
    <property type="entry name" value="eIF2B_5"/>
    <property type="match status" value="1"/>
</dbReference>
<dbReference type="SUPFAM" id="SSF100966">
    <property type="entry name" value="Translation initiation factor 2 beta, aIF2beta, N-terminal domain"/>
    <property type="match status" value="1"/>
</dbReference>
<dbReference type="SUPFAM" id="SSF75689">
    <property type="entry name" value="Zinc-binding domain of translation initiation factor 2 beta"/>
    <property type="match status" value="1"/>
</dbReference>
<organism>
    <name type="scientific">Bos taurus</name>
    <name type="common">Bovine</name>
    <dbReference type="NCBI Taxonomy" id="9913"/>
    <lineage>
        <taxon>Eukaryota</taxon>
        <taxon>Metazoa</taxon>
        <taxon>Chordata</taxon>
        <taxon>Craniata</taxon>
        <taxon>Vertebrata</taxon>
        <taxon>Euteleostomi</taxon>
        <taxon>Mammalia</taxon>
        <taxon>Eutheria</taxon>
        <taxon>Laurasiatheria</taxon>
        <taxon>Artiodactyla</taxon>
        <taxon>Ruminantia</taxon>
        <taxon>Pecora</taxon>
        <taxon>Bovidae</taxon>
        <taxon>Bovinae</taxon>
        <taxon>Bos</taxon>
    </lineage>
</organism>
<gene>
    <name type="primary">EIF2S2</name>
</gene>
<name>IF2B_BOVIN</name>
<sequence length="333" mass="38286">MSGDEMIFDPTMSKKKKKKKKPFMLDEEGDAQTEETQPSETKEVEPEPTEDKDVEADEEDSRKKDASDDLDDLNFFNQKKKKKKSKKIFDIDEAEEGIKDLKIESDVQEPAEPEEDLDIMLGNKKKKKKVVKFPDEDEVLEKDEALEDEDSKKDDGISFSNQTGPAWAGSERDYTYEELLNRVFNIMREKNPDMVAGEKRKFVMKPPQVVRVGTKKTSFVNFTDICKLLHRQPKHLLAFLLAELGTSGSIDGNNQLVIKGRFQQKQIENVLRRYIKEYVTCHTCRSPDTILQKDTRLYFLQCETCHSRCSVASIKTGFQAVTGRRAQLRAKAN</sequence>
<feature type="initiator methionine" description="Removed" evidence="2">
    <location>
        <position position="1"/>
    </location>
</feature>
<feature type="chain" id="PRO_0000247193" description="Eukaryotic translation initiation factor 2 subunit 2">
    <location>
        <begin position="2"/>
        <end position="333"/>
    </location>
</feature>
<feature type="zinc finger region" description="C4-type" evidence="6">
    <location>
        <begin position="281"/>
        <end position="305"/>
    </location>
</feature>
<feature type="region of interest" description="Disordered" evidence="7">
    <location>
        <begin position="1"/>
        <end position="87"/>
    </location>
</feature>
<feature type="region of interest" description="Disordered" evidence="7">
    <location>
        <begin position="98"/>
        <end position="117"/>
    </location>
</feature>
<feature type="region of interest" description="Disordered" evidence="7">
    <location>
        <begin position="141"/>
        <end position="165"/>
    </location>
</feature>
<feature type="compositionally biased region" description="Basic residues" evidence="7">
    <location>
        <begin position="13"/>
        <end position="22"/>
    </location>
</feature>
<feature type="compositionally biased region" description="Basic and acidic residues" evidence="7">
    <location>
        <begin position="40"/>
        <end position="51"/>
    </location>
</feature>
<feature type="compositionally biased region" description="Acidic residues" evidence="7">
    <location>
        <begin position="106"/>
        <end position="117"/>
    </location>
</feature>
<feature type="modified residue" description="N-acetylserine" evidence="2">
    <location>
        <position position="2"/>
    </location>
</feature>
<feature type="modified residue" description="Phosphoserine" evidence="2">
    <location>
        <position position="2"/>
    </location>
</feature>
<feature type="modified residue" description="Phosphoserine" evidence="3">
    <location>
        <position position="13"/>
    </location>
</feature>
<feature type="modified residue" description="Phosphothreonine" evidence="2">
    <location>
        <position position="36"/>
    </location>
</feature>
<feature type="modified residue" description="Phosphoserine" evidence="3">
    <location>
        <position position="67"/>
    </location>
</feature>
<feature type="modified residue" description="Phosphoserine" evidence="2">
    <location>
        <position position="105"/>
    </location>
</feature>
<feature type="modified residue" description="Phosphoserine" evidence="2">
    <location>
        <position position="158"/>
    </location>
</feature>
<feature type="modified residue" description="Phosphoserine" evidence="3">
    <location>
        <position position="218"/>
    </location>
</feature>
<feature type="modified residue" description="N6-acetyllysine" evidence="2">
    <location>
        <position position="265"/>
    </location>
</feature>
<feature type="modified residue" description="N6-acetyllysine" evidence="2">
    <location>
        <position position="293"/>
    </location>
</feature>
<feature type="cross-link" description="Glycyl lysine isopeptide (Lys-Gly) (interchain with G-Cter in SUMO2)" evidence="2">
    <location>
        <position position="102"/>
    </location>
</feature>
<feature type="sequence conflict" description="In Ref. 2; AAI22610." evidence="8" ref="2">
    <original>R</original>
    <variation>K</variation>
    <location>
        <position position="324"/>
    </location>
</feature>
<proteinExistence type="evidence at transcript level"/>